<protein>
    <recommendedName>
        <fullName evidence="1">tRNA pseudouridine synthase D</fullName>
        <ecNumber evidence="1">5.4.99.27</ecNumber>
    </recommendedName>
    <alternativeName>
        <fullName evidence="1">tRNA pseudouridine(13) synthase</fullName>
    </alternativeName>
    <alternativeName>
        <fullName evidence="1">tRNA pseudouridylate synthase D</fullName>
    </alternativeName>
    <alternativeName>
        <fullName evidence="1">tRNA-uridine isomerase D</fullName>
    </alternativeName>
</protein>
<reference key="1">
    <citation type="journal article" date="2003" name="Genome Res.">
        <title>Comparative genome analysis of Vibrio vulnificus, a marine pathogen.</title>
        <authorList>
            <person name="Chen C.-Y."/>
            <person name="Wu K.-M."/>
            <person name="Chang Y.-C."/>
            <person name="Chang C.-H."/>
            <person name="Tsai H.-C."/>
            <person name="Liao T.-L."/>
            <person name="Liu Y.-M."/>
            <person name="Chen H.-J."/>
            <person name="Shen A.B.-T."/>
            <person name="Li J.-C."/>
            <person name="Su T.-L."/>
            <person name="Shao C.-P."/>
            <person name="Lee C.-T."/>
            <person name="Hor L.-I."/>
            <person name="Tsai S.-F."/>
        </authorList>
    </citation>
    <scope>NUCLEOTIDE SEQUENCE [LARGE SCALE GENOMIC DNA]</scope>
    <source>
        <strain>YJ016</strain>
    </source>
</reference>
<feature type="chain" id="PRO_0000152529" description="tRNA pseudouridine synthase D">
    <location>
        <begin position="1"/>
        <end position="347"/>
    </location>
</feature>
<feature type="domain" description="TRUD" evidence="1">
    <location>
        <begin position="158"/>
        <end position="304"/>
    </location>
</feature>
<feature type="active site" description="Nucleophile" evidence="1">
    <location>
        <position position="81"/>
    </location>
</feature>
<accession>Q7MHQ6</accession>
<organism>
    <name type="scientific">Vibrio vulnificus (strain YJ016)</name>
    <dbReference type="NCBI Taxonomy" id="196600"/>
    <lineage>
        <taxon>Bacteria</taxon>
        <taxon>Pseudomonadati</taxon>
        <taxon>Pseudomonadota</taxon>
        <taxon>Gammaproteobacteria</taxon>
        <taxon>Vibrionales</taxon>
        <taxon>Vibrionaceae</taxon>
        <taxon>Vibrio</taxon>
    </lineage>
</organism>
<gene>
    <name evidence="1" type="primary">truD</name>
    <name type="ordered locus">VV2813</name>
</gene>
<name>TRUD_VIBVY</name>
<sequence length="347" mass="38524">MTDTLASLAYLAGKPTAQAKIKAKPEHFQVREDLGFEFTGSGEHLMVRIRKTGENTSFVANELAKACGVKSKDVSWAGLKDRHAVTEQWLSVHLPKAETPDFSAFLAQYPSIEILATARHNKKLRPGDLVGNDFVVTLSEVSDVDDVLKRLETVAKLGVPNYFGNQRFGNNGNNLQEAKRWGRDNVRSRNQNQRSLYLSAARSWIFNLIVSARLEQSLFDKVLLGDILFKGDEQLLVSAENHADLQSQYDAGDLVISGALAGDNALPTQDDALALEQVFLDAEPDLMALIRGNRMRHDRRAIALKPANLSWQVDGNNIILTFSLDAGSFATSIIRELVQEIAFEREF</sequence>
<evidence type="ECO:0000255" key="1">
    <source>
        <dbReference type="HAMAP-Rule" id="MF_01082"/>
    </source>
</evidence>
<evidence type="ECO:0000305" key="2"/>
<dbReference type="EC" id="5.4.99.27" evidence="1"/>
<dbReference type="EMBL" id="BA000037">
    <property type="protein sequence ID" value="BAC95577.1"/>
    <property type="status" value="ALT_INIT"/>
    <property type="molecule type" value="Genomic_DNA"/>
</dbReference>
<dbReference type="RefSeq" id="WP_026130623.1">
    <property type="nucleotide sequence ID" value="NC_005139.1"/>
</dbReference>
<dbReference type="SMR" id="Q7MHQ6"/>
<dbReference type="STRING" id="672.VV93_v1c25230"/>
<dbReference type="KEGG" id="vvy:VV2813"/>
<dbReference type="PATRIC" id="fig|196600.6.peg.2803"/>
<dbReference type="eggNOG" id="COG0585">
    <property type="taxonomic scope" value="Bacteria"/>
</dbReference>
<dbReference type="HOGENOM" id="CLU_005281_4_0_6"/>
<dbReference type="Proteomes" id="UP000002675">
    <property type="component" value="Chromosome I"/>
</dbReference>
<dbReference type="GO" id="GO:0005829">
    <property type="term" value="C:cytosol"/>
    <property type="evidence" value="ECO:0007669"/>
    <property type="project" value="TreeGrafter"/>
</dbReference>
<dbReference type="GO" id="GO:0003723">
    <property type="term" value="F:RNA binding"/>
    <property type="evidence" value="ECO:0007669"/>
    <property type="project" value="InterPro"/>
</dbReference>
<dbReference type="GO" id="GO:0160150">
    <property type="term" value="F:tRNA pseudouridine(13) synthase activity"/>
    <property type="evidence" value="ECO:0007669"/>
    <property type="project" value="UniProtKB-EC"/>
</dbReference>
<dbReference type="GO" id="GO:0031119">
    <property type="term" value="P:tRNA pseudouridine synthesis"/>
    <property type="evidence" value="ECO:0007669"/>
    <property type="project" value="UniProtKB-UniRule"/>
</dbReference>
<dbReference type="CDD" id="cd02575">
    <property type="entry name" value="PseudoU_synth_EcTruD"/>
    <property type="match status" value="1"/>
</dbReference>
<dbReference type="Gene3D" id="3.30.2350.20">
    <property type="entry name" value="TruD, catalytic domain"/>
    <property type="match status" value="1"/>
</dbReference>
<dbReference type="Gene3D" id="3.30.2340.10">
    <property type="entry name" value="TruD, insertion domain"/>
    <property type="match status" value="1"/>
</dbReference>
<dbReference type="HAMAP" id="MF_01082">
    <property type="entry name" value="TruD"/>
    <property type="match status" value="1"/>
</dbReference>
<dbReference type="InterPro" id="IPR020103">
    <property type="entry name" value="PsdUridine_synth_cat_dom_sf"/>
</dbReference>
<dbReference type="InterPro" id="IPR001656">
    <property type="entry name" value="PsdUridine_synth_TruD"/>
</dbReference>
<dbReference type="InterPro" id="IPR020119">
    <property type="entry name" value="PsdUridine_synth_TruD_CS"/>
</dbReference>
<dbReference type="InterPro" id="IPR011760">
    <property type="entry name" value="PsdUridine_synth_TruD_insert"/>
</dbReference>
<dbReference type="InterPro" id="IPR042214">
    <property type="entry name" value="TruD_catalytic"/>
</dbReference>
<dbReference type="InterPro" id="IPR043165">
    <property type="entry name" value="TruD_insert_sf"/>
</dbReference>
<dbReference type="InterPro" id="IPR050170">
    <property type="entry name" value="TruD_pseudoU_synthase"/>
</dbReference>
<dbReference type="NCBIfam" id="NF002155">
    <property type="entry name" value="PRK00984.1-4"/>
    <property type="match status" value="1"/>
</dbReference>
<dbReference type="NCBIfam" id="TIGR00094">
    <property type="entry name" value="tRNA_TruD_broad"/>
    <property type="match status" value="1"/>
</dbReference>
<dbReference type="PANTHER" id="PTHR47811">
    <property type="entry name" value="TRNA PSEUDOURIDINE SYNTHASE D"/>
    <property type="match status" value="1"/>
</dbReference>
<dbReference type="PANTHER" id="PTHR47811:SF1">
    <property type="entry name" value="TRNA PSEUDOURIDINE SYNTHASE D"/>
    <property type="match status" value="1"/>
</dbReference>
<dbReference type="Pfam" id="PF01142">
    <property type="entry name" value="TruD"/>
    <property type="match status" value="2"/>
</dbReference>
<dbReference type="SUPFAM" id="SSF55120">
    <property type="entry name" value="Pseudouridine synthase"/>
    <property type="match status" value="1"/>
</dbReference>
<dbReference type="PROSITE" id="PS50984">
    <property type="entry name" value="TRUD"/>
    <property type="match status" value="1"/>
</dbReference>
<dbReference type="PROSITE" id="PS01268">
    <property type="entry name" value="UPF0024"/>
    <property type="match status" value="1"/>
</dbReference>
<comment type="function">
    <text evidence="1">Responsible for synthesis of pseudouridine from uracil-13 in transfer RNAs.</text>
</comment>
<comment type="catalytic activity">
    <reaction evidence="1">
        <text>uridine(13) in tRNA = pseudouridine(13) in tRNA</text>
        <dbReference type="Rhea" id="RHEA:42540"/>
        <dbReference type="Rhea" id="RHEA-COMP:10105"/>
        <dbReference type="Rhea" id="RHEA-COMP:10106"/>
        <dbReference type="ChEBI" id="CHEBI:65314"/>
        <dbReference type="ChEBI" id="CHEBI:65315"/>
        <dbReference type="EC" id="5.4.99.27"/>
    </reaction>
</comment>
<comment type="similarity">
    <text evidence="1">Belongs to the pseudouridine synthase TruD family.</text>
</comment>
<comment type="sequence caution" evidence="2">
    <conflict type="erroneous initiation">
        <sequence resource="EMBL-CDS" id="BAC95577"/>
    </conflict>
</comment>
<keyword id="KW-0413">Isomerase</keyword>
<keyword id="KW-0819">tRNA processing</keyword>
<proteinExistence type="inferred from homology"/>